<gene>
    <name type="primary">rpsH</name>
    <name type="ordered locus">Z4676</name>
    <name type="ordered locus">ECs4171</name>
</gene>
<reference key="1">
    <citation type="journal article" date="2001" name="Nature">
        <title>Genome sequence of enterohaemorrhagic Escherichia coli O157:H7.</title>
        <authorList>
            <person name="Perna N.T."/>
            <person name="Plunkett G. III"/>
            <person name="Burland V."/>
            <person name="Mau B."/>
            <person name="Glasner J.D."/>
            <person name="Rose D.J."/>
            <person name="Mayhew G.F."/>
            <person name="Evans P.S."/>
            <person name="Gregor J."/>
            <person name="Kirkpatrick H.A."/>
            <person name="Posfai G."/>
            <person name="Hackett J."/>
            <person name="Klink S."/>
            <person name="Boutin A."/>
            <person name="Shao Y."/>
            <person name="Miller L."/>
            <person name="Grotbeck E.J."/>
            <person name="Davis N.W."/>
            <person name="Lim A."/>
            <person name="Dimalanta E.T."/>
            <person name="Potamousis K."/>
            <person name="Apodaca J."/>
            <person name="Anantharaman T.S."/>
            <person name="Lin J."/>
            <person name="Yen G."/>
            <person name="Schwartz D.C."/>
            <person name="Welch R.A."/>
            <person name="Blattner F.R."/>
        </authorList>
    </citation>
    <scope>NUCLEOTIDE SEQUENCE [LARGE SCALE GENOMIC DNA]</scope>
    <source>
        <strain>O157:H7 / EDL933 / ATCC 700927 / EHEC</strain>
    </source>
</reference>
<reference key="2">
    <citation type="journal article" date="2001" name="DNA Res.">
        <title>Complete genome sequence of enterohemorrhagic Escherichia coli O157:H7 and genomic comparison with a laboratory strain K-12.</title>
        <authorList>
            <person name="Hayashi T."/>
            <person name="Makino K."/>
            <person name="Ohnishi M."/>
            <person name="Kurokawa K."/>
            <person name="Ishii K."/>
            <person name="Yokoyama K."/>
            <person name="Han C.-G."/>
            <person name="Ohtsubo E."/>
            <person name="Nakayama K."/>
            <person name="Murata T."/>
            <person name="Tanaka M."/>
            <person name="Tobe T."/>
            <person name="Iida T."/>
            <person name="Takami H."/>
            <person name="Honda T."/>
            <person name="Sasakawa C."/>
            <person name="Ogasawara N."/>
            <person name="Yasunaga T."/>
            <person name="Kuhara S."/>
            <person name="Shiba T."/>
            <person name="Hattori M."/>
            <person name="Shinagawa H."/>
        </authorList>
    </citation>
    <scope>NUCLEOTIDE SEQUENCE [LARGE SCALE GENOMIC DNA]</scope>
    <source>
        <strain>O157:H7 / Sakai / RIMD 0509952 / EHEC</strain>
    </source>
</reference>
<proteinExistence type="inferred from homology"/>
<sequence length="130" mass="14127">MSMQDPIADMLTRIRNGQAANKAAVTMPSSKLKVAIANVLKEEGFIEDFKVEGDTKPELELTLKYFQGKAVVESIQRVSRPGLRIYKRKDELPKVMAGLGIAVVSTSKGVMTDRAARQAGLGGEIICYVA</sequence>
<dbReference type="EMBL" id="AE005174">
    <property type="protein sequence ID" value="AAG58427.1"/>
    <property type="molecule type" value="Genomic_DNA"/>
</dbReference>
<dbReference type="EMBL" id="BA000007">
    <property type="protein sequence ID" value="BAB37594.1"/>
    <property type="molecule type" value="Genomic_DNA"/>
</dbReference>
<dbReference type="PIR" id="C91150">
    <property type="entry name" value="C91150"/>
</dbReference>
<dbReference type="PIR" id="G85995">
    <property type="entry name" value="G85995"/>
</dbReference>
<dbReference type="RefSeq" id="NP_312198.1">
    <property type="nucleotide sequence ID" value="NC_002695.1"/>
</dbReference>
<dbReference type="RefSeq" id="WP_000062611.1">
    <property type="nucleotide sequence ID" value="NZ_VOAI01000041.1"/>
</dbReference>
<dbReference type="SMR" id="P0A7W9"/>
<dbReference type="STRING" id="155864.Z4676"/>
<dbReference type="GeneID" id="915977"/>
<dbReference type="GeneID" id="93778681"/>
<dbReference type="KEGG" id="ece:Z4676"/>
<dbReference type="KEGG" id="ecs:ECs_4171"/>
<dbReference type="PATRIC" id="fig|386585.9.peg.4354"/>
<dbReference type="eggNOG" id="COG0096">
    <property type="taxonomic scope" value="Bacteria"/>
</dbReference>
<dbReference type="HOGENOM" id="CLU_098428_0_0_6"/>
<dbReference type="OMA" id="NSAYHDT"/>
<dbReference type="Proteomes" id="UP000000558">
    <property type="component" value="Chromosome"/>
</dbReference>
<dbReference type="Proteomes" id="UP000002519">
    <property type="component" value="Chromosome"/>
</dbReference>
<dbReference type="GO" id="GO:1990904">
    <property type="term" value="C:ribonucleoprotein complex"/>
    <property type="evidence" value="ECO:0007669"/>
    <property type="project" value="UniProtKB-KW"/>
</dbReference>
<dbReference type="GO" id="GO:0005840">
    <property type="term" value="C:ribosome"/>
    <property type="evidence" value="ECO:0007669"/>
    <property type="project" value="UniProtKB-KW"/>
</dbReference>
<dbReference type="GO" id="GO:0019843">
    <property type="term" value="F:rRNA binding"/>
    <property type="evidence" value="ECO:0007669"/>
    <property type="project" value="UniProtKB-UniRule"/>
</dbReference>
<dbReference type="GO" id="GO:0003735">
    <property type="term" value="F:structural constituent of ribosome"/>
    <property type="evidence" value="ECO:0007669"/>
    <property type="project" value="InterPro"/>
</dbReference>
<dbReference type="GO" id="GO:0006412">
    <property type="term" value="P:translation"/>
    <property type="evidence" value="ECO:0007669"/>
    <property type="project" value="UniProtKB-UniRule"/>
</dbReference>
<dbReference type="FunFam" id="3.30.1370.30:FF:000003">
    <property type="entry name" value="30S ribosomal protein S8"/>
    <property type="match status" value="1"/>
</dbReference>
<dbReference type="FunFam" id="3.30.1490.10:FF:000001">
    <property type="entry name" value="30S ribosomal protein S8"/>
    <property type="match status" value="1"/>
</dbReference>
<dbReference type="Gene3D" id="3.30.1370.30">
    <property type="match status" value="1"/>
</dbReference>
<dbReference type="Gene3D" id="3.30.1490.10">
    <property type="match status" value="1"/>
</dbReference>
<dbReference type="HAMAP" id="MF_01302_B">
    <property type="entry name" value="Ribosomal_uS8_B"/>
    <property type="match status" value="1"/>
</dbReference>
<dbReference type="InterPro" id="IPR000630">
    <property type="entry name" value="Ribosomal_uS8"/>
</dbReference>
<dbReference type="InterPro" id="IPR047863">
    <property type="entry name" value="Ribosomal_uS8_CS"/>
</dbReference>
<dbReference type="InterPro" id="IPR035987">
    <property type="entry name" value="Ribosomal_uS8_sf"/>
</dbReference>
<dbReference type="NCBIfam" id="NF001109">
    <property type="entry name" value="PRK00136.1"/>
    <property type="match status" value="1"/>
</dbReference>
<dbReference type="PANTHER" id="PTHR11758">
    <property type="entry name" value="40S RIBOSOMAL PROTEIN S15A"/>
    <property type="match status" value="1"/>
</dbReference>
<dbReference type="Pfam" id="PF00410">
    <property type="entry name" value="Ribosomal_S8"/>
    <property type="match status" value="1"/>
</dbReference>
<dbReference type="SUPFAM" id="SSF56047">
    <property type="entry name" value="Ribosomal protein S8"/>
    <property type="match status" value="1"/>
</dbReference>
<dbReference type="PROSITE" id="PS00053">
    <property type="entry name" value="RIBOSOMAL_S8"/>
    <property type="match status" value="1"/>
</dbReference>
<protein>
    <recommendedName>
        <fullName evidence="2">Small ribosomal subunit protein uS8</fullName>
    </recommendedName>
    <alternativeName>
        <fullName>30S ribosomal protein S8</fullName>
    </alternativeName>
</protein>
<accession>P0A7W9</accession>
<accession>P02361</accession>
<evidence type="ECO:0000250" key="1"/>
<evidence type="ECO:0000305" key="2"/>
<name>RS8_ECO57</name>
<keyword id="KW-1185">Reference proteome</keyword>
<keyword id="KW-0687">Ribonucleoprotein</keyword>
<keyword id="KW-0689">Ribosomal protein</keyword>
<keyword id="KW-0694">RNA-binding</keyword>
<keyword id="KW-0699">rRNA-binding</keyword>
<comment type="function">
    <text evidence="1">One of the primary rRNA binding proteins, it binds directly to 16S rRNA central domain where it helps coordinate assembly of the platform of the 30S subunit.</text>
</comment>
<comment type="subunit">
    <text evidence="1">Part of the 30S ribosomal subunit. Contacts proteins S5 and S12 (By similarity).</text>
</comment>
<comment type="similarity">
    <text evidence="2">Belongs to the universal ribosomal protein uS8 family.</text>
</comment>
<feature type="initiator methionine" description="Removed" evidence="1">
    <location>
        <position position="1"/>
    </location>
</feature>
<feature type="chain" id="PRO_0000126406" description="Small ribosomal subunit protein uS8">
    <location>
        <begin position="2"/>
        <end position="130"/>
    </location>
</feature>
<organism>
    <name type="scientific">Escherichia coli O157:H7</name>
    <dbReference type="NCBI Taxonomy" id="83334"/>
    <lineage>
        <taxon>Bacteria</taxon>
        <taxon>Pseudomonadati</taxon>
        <taxon>Pseudomonadota</taxon>
        <taxon>Gammaproteobacteria</taxon>
        <taxon>Enterobacterales</taxon>
        <taxon>Enterobacteriaceae</taxon>
        <taxon>Escherichia</taxon>
    </lineage>
</organism>